<keyword id="KW-0007">Acetylation</keyword>
<keyword id="KW-0273">Eye lens protein</keyword>
<keyword id="KW-0479">Metal-binding</keyword>
<keyword id="KW-0862">Zinc</keyword>
<proteinExistence type="evidence at transcript level"/>
<comment type="function">
    <text>May contribute to the transparency and refractive index of the lens.</text>
</comment>
<comment type="subunit">
    <text evidence="1">Heteromer composed of three CRYAA and one CRYAB subunits. Aggregates with homologous proteins, including the small heat shock protein HSPB1, to form large heteromeric complexes. Inter-subunit bridging via zinc ions enhances stability, which is crucial as there is no protein turn over in the lens (By similarity).</text>
</comment>
<comment type="similarity">
    <text evidence="2">Belongs to the small heat shock protein (HSP20) family.</text>
</comment>
<organism>
    <name type="scientific">Aquarana catesbeiana</name>
    <name type="common">American bullfrog</name>
    <name type="synonym">Rana catesbeiana</name>
    <dbReference type="NCBI Taxonomy" id="8400"/>
    <lineage>
        <taxon>Eukaryota</taxon>
        <taxon>Metazoa</taxon>
        <taxon>Chordata</taxon>
        <taxon>Craniata</taxon>
        <taxon>Vertebrata</taxon>
        <taxon>Euteleostomi</taxon>
        <taxon>Amphibia</taxon>
        <taxon>Batrachia</taxon>
        <taxon>Anura</taxon>
        <taxon>Neobatrachia</taxon>
        <taxon>Ranoidea</taxon>
        <taxon>Ranidae</taxon>
        <taxon>Aquarana</taxon>
    </lineage>
</organism>
<feature type="chain" id="PRO_0000125920" description="Alpha-crystallin B chain">
    <location>
        <begin position="1"/>
        <end position="173"/>
    </location>
</feature>
<feature type="domain" description="sHSP" evidence="2">
    <location>
        <begin position="54"/>
        <end position="162"/>
    </location>
</feature>
<feature type="binding site" evidence="1">
    <location>
        <position position="81"/>
    </location>
    <ligand>
        <name>Zn(2+)</name>
        <dbReference type="ChEBI" id="CHEBI:29105"/>
        <label>1</label>
    </ligand>
</feature>
<feature type="binding site" evidence="1">
    <location>
        <position position="102"/>
    </location>
    <ligand>
        <name>Zn(2+)</name>
        <dbReference type="ChEBI" id="CHEBI:29105"/>
        <label>2</label>
    </ligand>
</feature>
<feature type="binding site" evidence="1">
    <location>
        <position position="104"/>
    </location>
    <ligand>
        <name>Zn(2+)</name>
        <dbReference type="ChEBI" id="CHEBI:29105"/>
        <label>2</label>
    </ligand>
</feature>
<feature type="binding site" evidence="1">
    <location>
        <position position="109"/>
    </location>
    <ligand>
        <name>Zn(2+)</name>
        <dbReference type="ChEBI" id="CHEBI:29105"/>
        <label>1</label>
    </ligand>
</feature>
<feature type="modified residue" description="N-acetylmethionine" evidence="1">
    <location>
        <position position="1"/>
    </location>
</feature>
<name>CRYAB_AQUCT</name>
<reference key="1">
    <citation type="journal article" date="1995" name="Biochem. Biophys. Res. Commun.">
        <title>Sequence analysis of frog alpha B-crystallin cDNA: sequence homology and evolutionary comparison of alpha A, alpha B and heat shock proteins.</title>
        <authorList>
            <person name="Lu S.F."/>
            <person name="Pan F.M."/>
            <person name="Chiou S.H."/>
        </authorList>
    </citation>
    <scope>NUCLEOTIDE SEQUENCE [MRNA]</scope>
    <source>
        <tissue>Lens</tissue>
    </source>
</reference>
<accession>Q91312</accession>
<dbReference type="EMBL" id="X87114">
    <property type="protein sequence ID" value="CAA60594.1"/>
    <property type="molecule type" value="mRNA"/>
</dbReference>
<dbReference type="PIR" id="S54824">
    <property type="entry name" value="S54824"/>
</dbReference>
<dbReference type="SMR" id="Q91312"/>
<dbReference type="GO" id="GO:0005737">
    <property type="term" value="C:cytoplasm"/>
    <property type="evidence" value="ECO:0007669"/>
    <property type="project" value="TreeGrafter"/>
</dbReference>
<dbReference type="GO" id="GO:0005634">
    <property type="term" value="C:nucleus"/>
    <property type="evidence" value="ECO:0007669"/>
    <property type="project" value="TreeGrafter"/>
</dbReference>
<dbReference type="GO" id="GO:0046872">
    <property type="term" value="F:metal ion binding"/>
    <property type="evidence" value="ECO:0007669"/>
    <property type="project" value="UniProtKB-KW"/>
</dbReference>
<dbReference type="GO" id="GO:0042803">
    <property type="term" value="F:protein homodimerization activity"/>
    <property type="evidence" value="ECO:0000250"/>
    <property type="project" value="UniProtKB"/>
</dbReference>
<dbReference type="GO" id="GO:0005212">
    <property type="term" value="F:structural constituent of eye lens"/>
    <property type="evidence" value="ECO:0007669"/>
    <property type="project" value="UniProtKB-KW"/>
</dbReference>
<dbReference type="GO" id="GO:0051082">
    <property type="term" value="F:unfolded protein binding"/>
    <property type="evidence" value="ECO:0007669"/>
    <property type="project" value="TreeGrafter"/>
</dbReference>
<dbReference type="GO" id="GO:0043066">
    <property type="term" value="P:negative regulation of apoptotic process"/>
    <property type="evidence" value="ECO:0007669"/>
    <property type="project" value="TreeGrafter"/>
</dbReference>
<dbReference type="GO" id="GO:0042026">
    <property type="term" value="P:protein refolding"/>
    <property type="evidence" value="ECO:0007669"/>
    <property type="project" value="TreeGrafter"/>
</dbReference>
<dbReference type="GO" id="GO:0009408">
    <property type="term" value="P:response to heat"/>
    <property type="evidence" value="ECO:0007669"/>
    <property type="project" value="TreeGrafter"/>
</dbReference>
<dbReference type="CDD" id="cd06498">
    <property type="entry name" value="ACD_alphaB-crystallin_HspB5"/>
    <property type="match status" value="1"/>
</dbReference>
<dbReference type="FunFam" id="2.60.40.790:FF:000011">
    <property type="entry name" value="Alpha-crystallin B chain"/>
    <property type="match status" value="1"/>
</dbReference>
<dbReference type="Gene3D" id="2.60.40.790">
    <property type="match status" value="1"/>
</dbReference>
<dbReference type="InterPro" id="IPR002068">
    <property type="entry name" value="A-crystallin/Hsp20_dom"/>
</dbReference>
<dbReference type="InterPro" id="IPR037882">
    <property type="entry name" value="ACD_alphaB-crystallin"/>
</dbReference>
<dbReference type="InterPro" id="IPR001436">
    <property type="entry name" value="Alpha-crystallin/sHSP_animal"/>
</dbReference>
<dbReference type="InterPro" id="IPR003090">
    <property type="entry name" value="Alpha-crystallin_N"/>
</dbReference>
<dbReference type="InterPro" id="IPR008978">
    <property type="entry name" value="HSP20-like_chaperone"/>
</dbReference>
<dbReference type="PANTHER" id="PTHR45640:SF5">
    <property type="entry name" value="ALPHA-CRYSTALLIN B CHAIN"/>
    <property type="match status" value="1"/>
</dbReference>
<dbReference type="PANTHER" id="PTHR45640">
    <property type="entry name" value="HEAT SHOCK PROTEIN HSP-12.2-RELATED"/>
    <property type="match status" value="1"/>
</dbReference>
<dbReference type="Pfam" id="PF00525">
    <property type="entry name" value="Crystallin"/>
    <property type="match status" value="1"/>
</dbReference>
<dbReference type="Pfam" id="PF00011">
    <property type="entry name" value="HSP20"/>
    <property type="match status" value="1"/>
</dbReference>
<dbReference type="PRINTS" id="PR00299">
    <property type="entry name" value="ACRYSTALLIN"/>
</dbReference>
<dbReference type="SUPFAM" id="SSF49764">
    <property type="entry name" value="HSP20-like chaperones"/>
    <property type="match status" value="1"/>
</dbReference>
<dbReference type="PROSITE" id="PS01031">
    <property type="entry name" value="SHSP"/>
    <property type="match status" value="1"/>
</dbReference>
<sequence>MDITIQHPWFRRQFYSFFGPNKMFEQCFGEHIQEADLFPSSVLSPFYFKYPFLRLPSWIESGLSEMRLEKDKFSINLDVKHFSPEELKVKVSGDFIEIHGKHEERQDEHGYVSRDFQRRYKIPVDVDPLSITSSLSPDGVLTVCGPRKQGDVPERSIPITREEKAALGAAPKK</sequence>
<protein>
    <recommendedName>
        <fullName>Alpha-crystallin B chain</fullName>
    </recommendedName>
    <alternativeName>
        <fullName>Alpha(B)-crystallin</fullName>
    </alternativeName>
</protein>
<evidence type="ECO:0000250" key="1"/>
<evidence type="ECO:0000255" key="2">
    <source>
        <dbReference type="PROSITE-ProRule" id="PRU00285"/>
    </source>
</evidence>
<gene>
    <name type="primary">CRYAB</name>
</gene>